<evidence type="ECO:0000255" key="1">
    <source>
        <dbReference type="HAMAP-Rule" id="MF_00134"/>
    </source>
</evidence>
<dbReference type="EC" id="4.1.1.48" evidence="1"/>
<dbReference type="EMBL" id="AE017354">
    <property type="protein sequence ID" value="AAU26921.1"/>
    <property type="molecule type" value="Genomic_DNA"/>
</dbReference>
<dbReference type="RefSeq" id="WP_010946569.1">
    <property type="nucleotide sequence ID" value="NC_002942.5"/>
</dbReference>
<dbReference type="RefSeq" id="YP_094868.1">
    <property type="nucleotide sequence ID" value="NC_002942.5"/>
</dbReference>
<dbReference type="SMR" id="Q5ZX99"/>
<dbReference type="STRING" id="272624.lpg0833"/>
<dbReference type="PaxDb" id="272624-lpg0833"/>
<dbReference type="GeneID" id="57034821"/>
<dbReference type="KEGG" id="lpn:lpg0833"/>
<dbReference type="PATRIC" id="fig|272624.6.peg.862"/>
<dbReference type="eggNOG" id="COG0134">
    <property type="taxonomic scope" value="Bacteria"/>
</dbReference>
<dbReference type="HOGENOM" id="CLU_034247_2_0_6"/>
<dbReference type="OrthoDB" id="9804217at2"/>
<dbReference type="UniPathway" id="UPA00035">
    <property type="reaction ID" value="UER00043"/>
</dbReference>
<dbReference type="Proteomes" id="UP000000609">
    <property type="component" value="Chromosome"/>
</dbReference>
<dbReference type="GO" id="GO:0004425">
    <property type="term" value="F:indole-3-glycerol-phosphate synthase activity"/>
    <property type="evidence" value="ECO:0007669"/>
    <property type="project" value="UniProtKB-UniRule"/>
</dbReference>
<dbReference type="GO" id="GO:0004640">
    <property type="term" value="F:phosphoribosylanthranilate isomerase activity"/>
    <property type="evidence" value="ECO:0007669"/>
    <property type="project" value="TreeGrafter"/>
</dbReference>
<dbReference type="GO" id="GO:0000162">
    <property type="term" value="P:L-tryptophan biosynthetic process"/>
    <property type="evidence" value="ECO:0007669"/>
    <property type="project" value="UniProtKB-UniRule"/>
</dbReference>
<dbReference type="CDD" id="cd00331">
    <property type="entry name" value="IGPS"/>
    <property type="match status" value="1"/>
</dbReference>
<dbReference type="FunFam" id="3.20.20.70:FF:000024">
    <property type="entry name" value="Indole-3-glycerol phosphate synthase"/>
    <property type="match status" value="1"/>
</dbReference>
<dbReference type="Gene3D" id="3.20.20.70">
    <property type="entry name" value="Aldolase class I"/>
    <property type="match status" value="1"/>
</dbReference>
<dbReference type="HAMAP" id="MF_00134_B">
    <property type="entry name" value="IGPS_B"/>
    <property type="match status" value="1"/>
</dbReference>
<dbReference type="InterPro" id="IPR013785">
    <property type="entry name" value="Aldolase_TIM"/>
</dbReference>
<dbReference type="InterPro" id="IPR045186">
    <property type="entry name" value="Indole-3-glycerol_P_synth"/>
</dbReference>
<dbReference type="InterPro" id="IPR013798">
    <property type="entry name" value="Indole-3-glycerol_P_synth_dom"/>
</dbReference>
<dbReference type="InterPro" id="IPR001468">
    <property type="entry name" value="Indole-3-GlycerolPSynthase_CS"/>
</dbReference>
<dbReference type="InterPro" id="IPR011060">
    <property type="entry name" value="RibuloseP-bd_barrel"/>
</dbReference>
<dbReference type="NCBIfam" id="NF001373">
    <property type="entry name" value="PRK00278.1-6"/>
    <property type="match status" value="1"/>
</dbReference>
<dbReference type="NCBIfam" id="NF001377">
    <property type="entry name" value="PRK00278.2-4"/>
    <property type="match status" value="1"/>
</dbReference>
<dbReference type="PANTHER" id="PTHR22854:SF2">
    <property type="entry name" value="INDOLE-3-GLYCEROL-PHOSPHATE SYNTHASE"/>
    <property type="match status" value="1"/>
</dbReference>
<dbReference type="PANTHER" id="PTHR22854">
    <property type="entry name" value="TRYPTOPHAN BIOSYNTHESIS PROTEIN"/>
    <property type="match status" value="1"/>
</dbReference>
<dbReference type="Pfam" id="PF00218">
    <property type="entry name" value="IGPS"/>
    <property type="match status" value="1"/>
</dbReference>
<dbReference type="SUPFAM" id="SSF51366">
    <property type="entry name" value="Ribulose-phoshate binding barrel"/>
    <property type="match status" value="1"/>
</dbReference>
<dbReference type="PROSITE" id="PS00614">
    <property type="entry name" value="IGPS"/>
    <property type="match status" value="1"/>
</dbReference>
<gene>
    <name evidence="1" type="primary">trpC</name>
    <name type="ordered locus">lpg0833</name>
</gene>
<name>TRPC_LEGPH</name>
<reference key="1">
    <citation type="journal article" date="2004" name="Science">
        <title>The genomic sequence of the accidental pathogen Legionella pneumophila.</title>
        <authorList>
            <person name="Chien M."/>
            <person name="Morozova I."/>
            <person name="Shi S."/>
            <person name="Sheng H."/>
            <person name="Chen J."/>
            <person name="Gomez S.M."/>
            <person name="Asamani G."/>
            <person name="Hill K."/>
            <person name="Nuara J."/>
            <person name="Feder M."/>
            <person name="Rineer J."/>
            <person name="Greenberg J.J."/>
            <person name="Steshenko V."/>
            <person name="Park S.H."/>
            <person name="Zhao B."/>
            <person name="Teplitskaya E."/>
            <person name="Edwards J.R."/>
            <person name="Pampou S."/>
            <person name="Georghiou A."/>
            <person name="Chou I.-C."/>
            <person name="Iannuccilli W."/>
            <person name="Ulz M.E."/>
            <person name="Kim D.H."/>
            <person name="Geringer-Sameth A."/>
            <person name="Goldsberry C."/>
            <person name="Morozov P."/>
            <person name="Fischer S.G."/>
            <person name="Segal G."/>
            <person name="Qu X."/>
            <person name="Rzhetsky A."/>
            <person name="Zhang P."/>
            <person name="Cayanis E."/>
            <person name="De Jong P.J."/>
            <person name="Ju J."/>
            <person name="Kalachikov S."/>
            <person name="Shuman H.A."/>
            <person name="Russo J.J."/>
        </authorList>
    </citation>
    <scope>NUCLEOTIDE SEQUENCE [LARGE SCALE GENOMIC DNA]</scope>
    <source>
        <strain>Philadelphia 1 / ATCC 33152 / DSM 7513</strain>
    </source>
</reference>
<sequence length="258" mass="28950">MNSILERIAKHKLEEVAVAKKNKPLHVLSKQQPGEMRDFITALKSNTSPAVIAEIKKASPSKGLIRKDFNVAEIAKIYTQNGARCLSVLTDIEFFQGHPDYLALAKSKTTLPVLRKDFIIDSYQIYESLVLGADCILLIVALLDDVQLMDFCQLAQELKMSVLVESHTQDELERALRLPTPLIGINNRSLHNFKTDIQLSIQLKQFVPKDKIIITESGINTREDIKLMQSHGINAFLIGESLMRADNIGKALQKLMTD</sequence>
<proteinExistence type="inferred from homology"/>
<accession>Q5ZX99</accession>
<keyword id="KW-0028">Amino-acid biosynthesis</keyword>
<keyword id="KW-0057">Aromatic amino acid biosynthesis</keyword>
<keyword id="KW-0210">Decarboxylase</keyword>
<keyword id="KW-0456">Lyase</keyword>
<keyword id="KW-1185">Reference proteome</keyword>
<keyword id="KW-0822">Tryptophan biosynthesis</keyword>
<comment type="catalytic activity">
    <reaction evidence="1">
        <text>1-(2-carboxyphenylamino)-1-deoxy-D-ribulose 5-phosphate + H(+) = (1S,2R)-1-C-(indol-3-yl)glycerol 3-phosphate + CO2 + H2O</text>
        <dbReference type="Rhea" id="RHEA:23476"/>
        <dbReference type="ChEBI" id="CHEBI:15377"/>
        <dbReference type="ChEBI" id="CHEBI:15378"/>
        <dbReference type="ChEBI" id="CHEBI:16526"/>
        <dbReference type="ChEBI" id="CHEBI:58613"/>
        <dbReference type="ChEBI" id="CHEBI:58866"/>
        <dbReference type="EC" id="4.1.1.48"/>
    </reaction>
</comment>
<comment type="pathway">
    <text evidence="1">Amino-acid biosynthesis; L-tryptophan biosynthesis; L-tryptophan from chorismate: step 4/5.</text>
</comment>
<comment type="similarity">
    <text evidence="1">Belongs to the TrpC family.</text>
</comment>
<protein>
    <recommendedName>
        <fullName evidence="1">Indole-3-glycerol phosphate synthase</fullName>
        <shortName evidence="1">IGPS</shortName>
        <ecNumber evidence="1">4.1.1.48</ecNumber>
    </recommendedName>
</protein>
<organism>
    <name type="scientific">Legionella pneumophila subsp. pneumophila (strain Philadelphia 1 / ATCC 33152 / DSM 7513)</name>
    <dbReference type="NCBI Taxonomy" id="272624"/>
    <lineage>
        <taxon>Bacteria</taxon>
        <taxon>Pseudomonadati</taxon>
        <taxon>Pseudomonadota</taxon>
        <taxon>Gammaproteobacteria</taxon>
        <taxon>Legionellales</taxon>
        <taxon>Legionellaceae</taxon>
        <taxon>Legionella</taxon>
    </lineage>
</organism>
<feature type="chain" id="PRO_1000018492" description="Indole-3-glycerol phosphate synthase">
    <location>
        <begin position="1"/>
        <end position="258"/>
    </location>
</feature>